<organism>
    <name type="scientific">Oryctolagus cuniculus</name>
    <name type="common">Rabbit</name>
    <dbReference type="NCBI Taxonomy" id="9986"/>
    <lineage>
        <taxon>Eukaryota</taxon>
        <taxon>Metazoa</taxon>
        <taxon>Chordata</taxon>
        <taxon>Craniata</taxon>
        <taxon>Vertebrata</taxon>
        <taxon>Euteleostomi</taxon>
        <taxon>Mammalia</taxon>
        <taxon>Eutheria</taxon>
        <taxon>Euarchontoglires</taxon>
        <taxon>Glires</taxon>
        <taxon>Lagomorpha</taxon>
        <taxon>Leporidae</taxon>
        <taxon>Oryctolagus</taxon>
    </lineage>
</organism>
<feature type="signal peptide" evidence="4">
    <location>
        <begin position="1"/>
        <end position="20"/>
    </location>
</feature>
<feature type="chain" id="PRO_5023820611" description="Low affinity immunoglobulin gamma Fc region receptor III-A" evidence="4">
    <location>
        <begin position="21"/>
        <end position="253"/>
    </location>
</feature>
<feature type="topological domain" description="Extracellular" evidence="9">
    <location>
        <begin position="21"/>
        <end position="207"/>
    </location>
</feature>
<feature type="transmembrane region" description="Helical" evidence="4">
    <location>
        <begin position="208"/>
        <end position="226"/>
    </location>
</feature>
<feature type="topological domain" description="Cytoplasmic" evidence="9">
    <location>
        <begin position="227"/>
        <end position="253"/>
    </location>
</feature>
<feature type="domain" description="Ig-like C2-type 1" evidence="5">
    <location>
        <begin position="24"/>
        <end position="90"/>
    </location>
</feature>
<feature type="domain" description="Ig-like C2-type 2" evidence="5">
    <location>
        <begin position="99"/>
        <end position="189"/>
    </location>
</feature>
<feature type="site" description="Important for receptor turnover" evidence="2">
    <location>
        <position position="221"/>
    </location>
</feature>
<feature type="glycosylation site" description="N-linked (GlcNAc...) asparagine" evidence="6">
    <location>
        <position position="56"/>
    </location>
</feature>
<feature type="glycosylation site" description="N-linked (GlcNAc...) asparagine" evidence="6">
    <location>
        <position position="63"/>
    </location>
</feature>
<feature type="glycosylation site" description="N-linked (GlcNAc...) asparagine" evidence="6">
    <location>
        <position position="165"/>
    </location>
</feature>
<feature type="glycosylation site" description="N-linked (GlcNAc...) asparagine" evidence="6">
    <location>
        <position position="180"/>
    </location>
</feature>
<feature type="disulfide bond" evidence="5">
    <location>
        <begin position="47"/>
        <end position="89"/>
    </location>
</feature>
<feature type="disulfide bond" evidence="5">
    <location>
        <begin position="128"/>
        <end position="172"/>
    </location>
</feature>
<gene>
    <name evidence="2" type="primary">FCGR3A</name>
</gene>
<dbReference type="EMBL" id="AAGW02000249">
    <property type="status" value="NOT_ANNOTATED_CDS"/>
    <property type="molecule type" value="Genomic_DNA"/>
</dbReference>
<dbReference type="SMR" id="G1TR84"/>
<dbReference type="FunCoup" id="G1TR84">
    <property type="interactions" value="88"/>
</dbReference>
<dbReference type="GlyCosmos" id="G1TR84">
    <property type="glycosylation" value="4 sites, No reported glycans"/>
</dbReference>
<dbReference type="PaxDb" id="9986-ENSOCUP00000019538"/>
<dbReference type="Ensembl" id="ENSOCUT00000024322.3">
    <property type="protein sequence ID" value="ENSOCUP00000019538.3"/>
    <property type="gene ID" value="ENSOCUG00000024349.3"/>
</dbReference>
<dbReference type="KEGG" id="ocu:100337909"/>
<dbReference type="eggNOG" id="ENOG502RU1M">
    <property type="taxonomic scope" value="Eukaryota"/>
</dbReference>
<dbReference type="GeneTree" id="ENSGT01050000244808"/>
<dbReference type="HOGENOM" id="CLU_023383_1_0_1"/>
<dbReference type="InParanoid" id="G1TR84"/>
<dbReference type="OrthoDB" id="8917564at2759"/>
<dbReference type="TreeFam" id="TF335097"/>
<dbReference type="Proteomes" id="UP000001811">
    <property type="component" value="Chromosome 13"/>
</dbReference>
<dbReference type="Bgee" id="ENSOCUG00000024349">
    <property type="expression patterns" value="Expressed in blood and 20 other cell types or tissues"/>
</dbReference>
<dbReference type="GO" id="GO:0009897">
    <property type="term" value="C:external side of plasma membrane"/>
    <property type="evidence" value="ECO:0007669"/>
    <property type="project" value="TreeGrafter"/>
</dbReference>
<dbReference type="GO" id="GO:0019864">
    <property type="term" value="F:IgG binding"/>
    <property type="evidence" value="ECO:0007669"/>
    <property type="project" value="UniProtKB-KW"/>
</dbReference>
<dbReference type="GO" id="GO:0019770">
    <property type="term" value="F:IgG receptor activity"/>
    <property type="evidence" value="ECO:0007669"/>
    <property type="project" value="TreeGrafter"/>
</dbReference>
<dbReference type="GO" id="GO:0001788">
    <property type="term" value="P:antibody-dependent cellular cytotoxicity"/>
    <property type="evidence" value="ECO:0007669"/>
    <property type="project" value="TreeGrafter"/>
</dbReference>
<dbReference type="CDD" id="cd05752">
    <property type="entry name" value="Ig1_FcgammaR_like"/>
    <property type="match status" value="1"/>
</dbReference>
<dbReference type="CDD" id="cd05753">
    <property type="entry name" value="Ig2_FcgammaR_like"/>
    <property type="match status" value="1"/>
</dbReference>
<dbReference type="FunFam" id="2.60.40.10:FF:000217">
    <property type="entry name" value="High affinity immunoglobulin gamma Fc receptor I"/>
    <property type="match status" value="1"/>
</dbReference>
<dbReference type="FunFam" id="2.60.40.10:FF:000356">
    <property type="entry name" value="Low affinity immunoglobulin gamma Fc region receptor III-A"/>
    <property type="match status" value="1"/>
</dbReference>
<dbReference type="Gene3D" id="2.60.40.10">
    <property type="entry name" value="Immunoglobulins"/>
    <property type="match status" value="2"/>
</dbReference>
<dbReference type="InterPro" id="IPR007110">
    <property type="entry name" value="Ig-like_dom"/>
</dbReference>
<dbReference type="InterPro" id="IPR036179">
    <property type="entry name" value="Ig-like_dom_sf"/>
</dbReference>
<dbReference type="InterPro" id="IPR013783">
    <property type="entry name" value="Ig-like_fold"/>
</dbReference>
<dbReference type="InterPro" id="IPR050488">
    <property type="entry name" value="Ig_Fc_receptor"/>
</dbReference>
<dbReference type="InterPro" id="IPR003599">
    <property type="entry name" value="Ig_sub"/>
</dbReference>
<dbReference type="InterPro" id="IPR003598">
    <property type="entry name" value="Ig_sub2"/>
</dbReference>
<dbReference type="PANTHER" id="PTHR11481">
    <property type="entry name" value="IMMUNOGLOBULIN FC RECEPTOR"/>
    <property type="match status" value="1"/>
</dbReference>
<dbReference type="PANTHER" id="PTHR11481:SF103">
    <property type="entry name" value="LOW AFFINITY IMMUNOGLOBULIN GAMMA FC REGION RECEPTOR III-A-RELATED"/>
    <property type="match status" value="1"/>
</dbReference>
<dbReference type="Pfam" id="PF13895">
    <property type="entry name" value="Ig_2"/>
    <property type="match status" value="2"/>
</dbReference>
<dbReference type="SMART" id="SM00409">
    <property type="entry name" value="IG"/>
    <property type="match status" value="2"/>
</dbReference>
<dbReference type="SMART" id="SM00408">
    <property type="entry name" value="IGc2"/>
    <property type="match status" value="2"/>
</dbReference>
<dbReference type="SUPFAM" id="SSF48726">
    <property type="entry name" value="Immunoglobulin"/>
    <property type="match status" value="2"/>
</dbReference>
<dbReference type="PROSITE" id="PS50835">
    <property type="entry name" value="IG_LIKE"/>
    <property type="match status" value="2"/>
</dbReference>
<evidence type="ECO:0000250" key="1">
    <source>
        <dbReference type="UniProtKB" id="A0A0B4J1G0"/>
    </source>
</evidence>
<evidence type="ECO:0000250" key="2">
    <source>
        <dbReference type="UniProtKB" id="P08637"/>
    </source>
</evidence>
<evidence type="ECO:0000250" key="3">
    <source>
        <dbReference type="UniProtKB" id="Q28942"/>
    </source>
</evidence>
<evidence type="ECO:0000255" key="4"/>
<evidence type="ECO:0000255" key="5">
    <source>
        <dbReference type="PROSITE-ProRule" id="PRU00114"/>
    </source>
</evidence>
<evidence type="ECO:0000255" key="6">
    <source>
        <dbReference type="PROSITE-ProRule" id="PRU00498"/>
    </source>
</evidence>
<evidence type="ECO:0000269" key="7">
    <source>
    </source>
</evidence>
<evidence type="ECO:0000303" key="8">
    <source>
    </source>
</evidence>
<evidence type="ECO:0000305" key="9"/>
<sequence>MGQPLPPVALLLLVSASSRAADVPKALVLLDPPWASVLKDDHVTLKCQGLHPAGDNTTQWLHNGSLLSSQAPAYTITAARAEDGGEYRCQTGLSSLSDPVQLHVHLGWLVLQAPRWVFQEGEPIQLRCHSWKNNKLHKVTYLQNGRGLRYFHQNSDLHIPEATRNHSGSYFCRGLIGHHNMSSETVTITVQGPANPVISSSVLPWHQIAFCLVMGLLLAADTGLYFSVQRDLRSSQRARKEHTLGWSLGSQDK</sequence>
<proteinExistence type="inferred from homology"/>
<comment type="function">
    <text evidence="1 2 3 7">Receptor for the invariable Fc fragment of immunoglobulin gamma (IgG) (By similarity). Optimally activated upon binding of clustered antigen-IgG complexes displayed on cell surfaces, triggers lysis of antibody-coated cells, a process known as antibody-dependent cellular cytotoxicity (ADCC). Does not bind free monomeric IgG, thus avoiding inappropriate effector cell activation in the absence of antigenic trigger. Mediates IgG effector functions on natural killer (NK) cells. Binds antigen-IgG complexes generated upon infection and triggers NK cell-dependent cytokine production and degranulation to limit viral load and propagation (By similarity). Fc-binding subunit that associates with FCER1G adapter to form functional signaling complexes. Following the engagement of antigen-IgG complexes, triggers phosphorylation of immunoreceptor tyrosine-based activation motif (ITAM)-containing adapters with subsequent activation of phosphatidylinositol 3-kinase signaling and sustained elevation of intracellular calcium that ultimately drive NK cell activation (By similarity). Mediates enhanced ADCC in response to afucosylated IgGs (PubMed:34485821).</text>
</comment>
<comment type="subunit">
    <text evidence="2">Forms a heterooligomeric complex with ITAM-containing signaling subunits FCER1G. Interacts (via transmembrane domain) with signaling subunits; this interaction is a prerequisite for receptor complex expression on the cell surface and intracellular signal transduction. Binds the Fc region of antigen-complexed IgG.</text>
</comment>
<comment type="subcellular location">
    <subcellularLocation>
        <location evidence="2">Cell membrane</location>
        <topology evidence="4">Single-pass membrane protein</topology>
    </subcellularLocation>
</comment>
<reference key="1">
    <citation type="journal article" date="2011" name="Nature">
        <title>A high-resolution map of human evolutionary constraint using 29 mammals.</title>
        <authorList>
            <person name="Lindblad-Toh K."/>
            <person name="Garber M."/>
            <person name="Zuk O."/>
            <person name="Lin M.F."/>
            <person name="Parker B.J."/>
            <person name="Washietl S."/>
            <person name="Kheradpour P."/>
            <person name="Ernst J."/>
            <person name="Jordan G."/>
            <person name="Mauceli E."/>
            <person name="Ward L.D."/>
            <person name="Lowe C.B."/>
            <person name="Holloway A.K."/>
            <person name="Clamp M."/>
            <person name="Gnerre S."/>
            <person name="Alfoldi J."/>
            <person name="Beal K."/>
            <person name="Chang J."/>
            <person name="Clawson H."/>
            <person name="Cuff J."/>
            <person name="Di Palma F."/>
            <person name="Fitzgerald S."/>
            <person name="Flicek P."/>
            <person name="Guttman M."/>
            <person name="Hubisz M.J."/>
            <person name="Jaffe D.B."/>
            <person name="Jungreis I."/>
            <person name="Kent W.J."/>
            <person name="Kostka D."/>
            <person name="Lara M."/>
            <person name="Martins A.L."/>
            <person name="Massingham T."/>
            <person name="Moltke I."/>
            <person name="Raney B.J."/>
            <person name="Rasmussen M.D."/>
            <person name="Robinson J."/>
            <person name="Stark A."/>
            <person name="Vilella A.J."/>
            <person name="Wen J."/>
            <person name="Xie X."/>
            <person name="Zody M.C."/>
            <person name="Baldwin J."/>
            <person name="Bloom T."/>
            <person name="Chin C.W."/>
            <person name="Heiman D."/>
            <person name="Nicol R."/>
            <person name="Nusbaum C."/>
            <person name="Young S."/>
            <person name="Wilkinson J."/>
            <person name="Worley K.C."/>
            <person name="Kovar C.L."/>
            <person name="Muzny D.M."/>
            <person name="Gibbs R.A."/>
            <person name="Cree A."/>
            <person name="Dihn H.H."/>
            <person name="Fowler G."/>
            <person name="Jhangiani S."/>
            <person name="Joshi V."/>
            <person name="Lee S."/>
            <person name="Lewis L.R."/>
            <person name="Nazareth L.V."/>
            <person name="Okwuonu G."/>
            <person name="Santibanez J."/>
            <person name="Warren W.C."/>
            <person name="Mardis E.R."/>
            <person name="Weinstock G.M."/>
            <person name="Wilson R.K."/>
            <person name="Delehaunty K."/>
            <person name="Dooling D."/>
            <person name="Fronik C."/>
            <person name="Fulton L."/>
            <person name="Fulton B."/>
            <person name="Graves T."/>
            <person name="Minx P."/>
            <person name="Sodergren E."/>
            <person name="Birney E."/>
            <person name="Margulies E.H."/>
            <person name="Herrero J."/>
            <person name="Green E.D."/>
            <person name="Haussler D."/>
            <person name="Siepel A."/>
            <person name="Goldman N."/>
            <person name="Pollard K.S."/>
            <person name="Pedersen J.S."/>
            <person name="Lander E.S."/>
            <person name="Kellis M."/>
        </authorList>
    </citation>
    <scope>NUCLEOTIDE SEQUENCE [LARGE SCALE GENOMIC DNA]</scope>
    <source>
        <strain>Thorbecke</strain>
    </source>
</reference>
<reference key="2">
    <citation type="journal article" date="1994" name="Bull. World Health Organ.">
        <title>Nomenclature of Fc receptors. IUIS/WHO Subcommittee on Nomenclature of Fc receptors.</title>
        <authorList>
            <person name="Conrad D."/>
            <person name="Cooper M."/>
            <person name="Fridman W.H."/>
            <person name="Kinet J.P."/>
            <person name="Ravetch J."/>
        </authorList>
    </citation>
    <scope>NOMENCLATURE</scope>
</reference>
<reference key="3">
    <citation type="journal article" date="2021" name="Antib Ther">
        <title>Cross-species higher sensitivities of FcgammaRIIIA/FcgammaRIV to afucosylated IgG for enhanced ADCC.</title>
        <authorList>
            <person name="Mao C."/>
            <person name="Near R."/>
            <person name="Zhong X."/>
            <person name="Gao W."/>
        </authorList>
    </citation>
    <scope>FUNCTION</scope>
</reference>
<accession>G1TR84</accession>
<name>FCG3A_RABIT</name>
<keyword id="KW-1003">Cell membrane</keyword>
<keyword id="KW-1015">Disulfide bond</keyword>
<keyword id="KW-0325">Glycoprotein</keyword>
<keyword id="KW-0390">IgG-binding protein</keyword>
<keyword id="KW-0393">Immunoglobulin domain</keyword>
<keyword id="KW-0472">Membrane</keyword>
<keyword id="KW-0675">Receptor</keyword>
<keyword id="KW-1185">Reference proteome</keyword>
<keyword id="KW-0677">Repeat</keyword>
<keyword id="KW-0732">Signal</keyword>
<keyword id="KW-0812">Transmembrane</keyword>
<keyword id="KW-1133">Transmembrane helix</keyword>
<protein>
    <recommendedName>
        <fullName evidence="2">Low affinity immunoglobulin gamma Fc region receptor III-A</fullName>
        <shortName>IgG Fc receptor III-A</shortName>
    </recommendedName>
    <alternativeName>
        <fullName evidence="8">FcgammaRIIIA</fullName>
    </alternativeName>
    <cdAntigenName>CD16a</cdAntigenName>
</protein>